<name>KRT34_HUMAN</name>
<comment type="interaction">
    <interactant intactId="EBI-1047093">
        <id>O76011</id>
    </interactant>
    <interactant intactId="EBI-2809489">
        <id>Q9NQ94</id>
        <label>A1CF</label>
    </interactant>
    <organismsDiffer>false</organismsDiffer>
    <experiments>3</experiments>
</comment>
<comment type="interaction">
    <interactant intactId="EBI-1047093">
        <id>O76011</id>
    </interactant>
    <interactant intactId="EBI-2824666">
        <id>Q6UXT9</id>
        <label>ABHD15</label>
    </interactant>
    <organismsDiffer>false</organismsDiffer>
    <experiments>3</experiments>
</comment>
<comment type="interaction">
    <interactant intactId="EBI-1047093">
        <id>O76011</id>
    </interactant>
    <interactant intactId="EBI-11096309">
        <id>Q9NYB9-2</id>
        <label>ABI2</label>
    </interactant>
    <organismsDiffer>false</organismsDiffer>
    <experiments>3</experiments>
</comment>
<comment type="interaction">
    <interactant intactId="EBI-1047093">
        <id>O76011</id>
    </interactant>
    <interactant intactId="EBI-12015266">
        <id>P18825</id>
        <label>ADRA2C</label>
    </interactant>
    <organismsDiffer>false</organismsDiffer>
    <experiments>3</experiments>
</comment>
<comment type="interaction">
    <interactant intactId="EBI-1047093">
        <id>O76011</id>
    </interactant>
    <interactant intactId="EBI-727098">
        <id>P21549</id>
        <label>AGXT</label>
    </interactant>
    <organismsDiffer>false</organismsDiffer>
    <experiments>3</experiments>
</comment>
<comment type="interaction">
    <interactant intactId="EBI-1047093">
        <id>O76011</id>
    </interactant>
    <interactant intactId="EBI-745226">
        <id>Q13155</id>
        <label>AIMP2</label>
    </interactant>
    <organismsDiffer>false</organismsDiffer>
    <experiments>3</experiments>
</comment>
<comment type="interaction">
    <interactant intactId="EBI-1047093">
        <id>O76011</id>
    </interactant>
    <interactant intactId="EBI-2558314">
        <id>P43353</id>
        <label>ALDH3B1</label>
    </interactant>
    <organismsDiffer>false</organismsDiffer>
    <experiments>3</experiments>
</comment>
<comment type="interaction">
    <interactant intactId="EBI-1047093">
        <id>O76011</id>
    </interactant>
    <interactant intactId="EBI-17286414">
        <id>A2BDD9</id>
        <label>AMOT</label>
    </interactant>
    <organismsDiffer>false</organismsDiffer>
    <experiments>3</experiments>
</comment>
<comment type="interaction">
    <interactant intactId="EBI-1047093">
        <id>O76011</id>
    </interactant>
    <interactant intactId="EBI-17183751">
        <id>X5D778</id>
        <label>ANKRD11</label>
    </interactant>
    <organismsDiffer>false</organismsDiffer>
    <experiments>3</experiments>
</comment>
<comment type="interaction">
    <interactant intactId="EBI-1047093">
        <id>O76011</id>
    </interactant>
    <interactant intactId="EBI-11954519">
        <id>Q49AR9</id>
        <label>ANKS1A</label>
    </interactant>
    <organismsDiffer>false</organismsDiffer>
    <experiments>3</experiments>
</comment>
<comment type="interaction">
    <interactant intactId="EBI-1047093">
        <id>O76011</id>
    </interactant>
    <interactant intactId="EBI-742909">
        <id>Q9H6L4</id>
        <label>ARMC7</label>
    </interactant>
    <organismsDiffer>false</organismsDiffer>
    <experiments>3</experiments>
</comment>
<comment type="interaction">
    <interactant intactId="EBI-1047093">
        <id>O76011</id>
    </interactant>
    <interactant intactId="EBI-743231">
        <id>O95671</id>
        <label>ASMTL</label>
    </interactant>
    <organismsDiffer>false</organismsDiffer>
    <experiments>3</experiments>
</comment>
<comment type="interaction">
    <interactant intactId="EBI-1047093">
        <id>O76011</id>
    </interactant>
    <interactant intactId="EBI-12006308">
        <id>Q7Z3C6-3</id>
        <label>ATG9A</label>
    </interactant>
    <organismsDiffer>false</organismsDiffer>
    <experiments>3</experiments>
</comment>
<comment type="interaction">
    <interactant intactId="EBI-1047093">
        <id>O76011</id>
    </interactant>
    <interactant intactId="EBI-745689">
        <id>Q7L5A3</id>
        <label>ATOSB</label>
    </interactant>
    <organismsDiffer>false</organismsDiffer>
    <experiments>3</experiments>
</comment>
<comment type="interaction">
    <interactant intactId="EBI-1047093">
        <id>O76011</id>
    </interactant>
    <interactant intactId="EBI-1166928">
        <id>Q8N5M1</id>
        <label>ATPAF2</label>
    </interactant>
    <organismsDiffer>false</organismsDiffer>
    <experiments>3</experiments>
</comment>
<comment type="interaction">
    <interactant intactId="EBI-1047093">
        <id>O76011</id>
    </interactant>
    <interactant intactId="EBI-742695">
        <id>Q8N1L9</id>
        <label>BATF2</label>
    </interactant>
    <organismsDiffer>false</organismsDiffer>
    <experiments>3</experiments>
</comment>
<comment type="interaction">
    <interactant intactId="EBI-1047093">
        <id>O76011</id>
    </interactant>
    <interactant intactId="EBI-1050106">
        <id>O75934</id>
        <label>BCAS2</label>
    </interactant>
    <organismsDiffer>false</organismsDiffer>
    <experiments>5</experiments>
</comment>
<comment type="interaction">
    <interactant intactId="EBI-1047093">
        <id>O76011</id>
    </interactant>
    <interactant intactId="EBI-7162175">
        <id>Q9HBH7</id>
        <label>BEX1</label>
    </interactant>
    <organismsDiffer>false</organismsDiffer>
    <experiments>3</experiments>
</comment>
<comment type="interaction">
    <interactant intactId="EBI-1047093">
        <id>O76011</id>
    </interactant>
    <interactant intactId="EBI-745073">
        <id>Q9BXY8</id>
        <label>BEX2</label>
    </interactant>
    <organismsDiffer>false</organismsDiffer>
    <experiments>3</experiments>
</comment>
<comment type="interaction">
    <interactant intactId="EBI-1047093">
        <id>O76011</id>
    </interactant>
    <interactant intactId="EBI-741753">
        <id>Q00994</id>
        <label>BEX3</label>
    </interactant>
    <organismsDiffer>false</organismsDiffer>
    <experiments>3</experiments>
</comment>
<comment type="interaction">
    <interactant intactId="EBI-1047093">
        <id>O76011</id>
    </interactant>
    <interactant intactId="EBI-12144263">
        <id>Q8NDY6</id>
        <label>BHLHE23</label>
    </interactant>
    <organismsDiffer>false</organismsDiffer>
    <experiments>3</experiments>
</comment>
<comment type="interaction">
    <interactant intactId="EBI-1047093">
        <id>O76011</id>
    </interactant>
    <interactant intactId="EBI-12086950">
        <id>Q53S33</id>
        <label>BOLA3</label>
    </interactant>
    <organismsDiffer>false</organismsDiffer>
    <experiments>3</experiments>
</comment>
<comment type="interaction">
    <interactant intactId="EBI-1047093">
        <id>O76011</id>
    </interactant>
    <interactant intactId="EBI-12040255">
        <id>Q0VDD7-2</id>
        <label>BRME1</label>
    </interactant>
    <organismsDiffer>false</organismsDiffer>
    <experiments>3</experiments>
</comment>
<comment type="interaction">
    <interactant intactId="EBI-1047093">
        <id>O76011</id>
    </interactant>
    <interactant intactId="EBI-6660291">
        <id>Q6NUJ2</id>
        <label>C11orf87</label>
    </interactant>
    <organismsDiffer>false</organismsDiffer>
    <experiments>3</experiments>
</comment>
<comment type="interaction">
    <interactant intactId="EBI-1047093">
        <id>O76011</id>
    </interactant>
    <interactant intactId="EBI-12877892">
        <id>Q8WW18</id>
        <label>C17orf50</label>
    </interactant>
    <organismsDiffer>false</organismsDiffer>
    <experiments>3</experiments>
</comment>
<comment type="interaction">
    <interactant intactId="EBI-1047093">
        <id>O76011</id>
    </interactant>
    <interactant intactId="EBI-747505">
        <id>Q8TAB5</id>
        <label>C1orf216</label>
    </interactant>
    <organismsDiffer>false</organismsDiffer>
    <experiments>3</experiments>
</comment>
<comment type="interaction">
    <interactant intactId="EBI-1047093">
        <id>O76011</id>
    </interactant>
    <interactant intactId="EBI-712912">
        <id>Q9HC52</id>
        <label>CBX8</label>
    </interactant>
    <organismsDiffer>false</organismsDiffer>
    <experiments>3</experiments>
</comment>
<comment type="interaction">
    <interactant intactId="EBI-1047093">
        <id>O76011</id>
    </interactant>
    <interactant intactId="EBI-744556">
        <id>Q96HB5</id>
        <label>CCDC120</label>
    </interactant>
    <organismsDiffer>false</organismsDiffer>
    <experiments>3</experiments>
</comment>
<comment type="interaction">
    <interactant intactId="EBI-1047093">
        <id>O76011</id>
    </interactant>
    <interactant intactId="EBI-10961312">
        <id>Q8IYE1</id>
        <label>CCDC13</label>
    </interactant>
    <organismsDiffer>false</organismsDiffer>
    <experiments>3</experiments>
</comment>
<comment type="interaction">
    <interactant intactId="EBI-1047093">
        <id>O76011</id>
    </interactant>
    <interactant intactId="EBI-10749669">
        <id>Q8IYE0</id>
        <label>CCDC146</label>
    </interactant>
    <organismsDiffer>false</organismsDiffer>
    <experiments>3</experiments>
</comment>
<comment type="interaction">
    <interactant intactId="EBI-1047093">
        <id>O76011</id>
    </interactant>
    <interactant intactId="EBI-10181422">
        <id>A0A1B0GWI1</id>
        <label>CCDC196</label>
    </interactant>
    <organismsDiffer>false</organismsDiffer>
    <experiments>3</experiments>
</comment>
<comment type="interaction">
    <interactant intactId="EBI-1047093">
        <id>O76011</id>
    </interactant>
    <interactant intactId="EBI-11748295">
        <id>E9PSE9</id>
        <label>CCDC198</label>
    </interactant>
    <organismsDiffer>false</organismsDiffer>
    <experiments>3</experiments>
</comment>
<comment type="interaction">
    <interactant intactId="EBI-1047093">
        <id>O76011</id>
    </interactant>
    <interactant intactId="EBI-1104933">
        <id>Q8N4L8</id>
        <label>CCDC24</label>
    </interactant>
    <organismsDiffer>false</organismsDiffer>
    <experiments>5</experiments>
</comment>
<comment type="interaction">
    <interactant intactId="EBI-1047093">
        <id>O76011</id>
    </interactant>
    <interactant intactId="EBI-10175300">
        <id>Q8TD31-3</id>
        <label>CCHCR1</label>
    </interactant>
    <organismsDiffer>false</organismsDiffer>
    <experiments>3</experiments>
</comment>
<comment type="interaction">
    <interactant intactId="EBI-1047093">
        <id>O76011</id>
    </interactant>
    <interactant intactId="EBI-395261">
        <id>P24863</id>
        <label>CCNC</label>
    </interactant>
    <organismsDiffer>false</organismsDiffer>
    <experiments>3</experiments>
</comment>
<comment type="interaction">
    <interactant intactId="EBI-1047093">
        <id>O76011</id>
    </interactant>
    <interactant intactId="EBI-11983537">
        <id>Q86Y33-5</id>
        <label>CDC20B</label>
    </interactant>
    <organismsDiffer>false</organismsDiffer>
    <experiments>3</experiments>
</comment>
<comment type="interaction">
    <interactant intactId="EBI-1047093">
        <id>O76011</id>
    </interactant>
    <interactant intactId="EBI-746238">
        <id>Q07002</id>
        <label>CDK18</label>
    </interactant>
    <organismsDiffer>false</organismsDiffer>
    <experiments>3</experiments>
</comment>
<comment type="interaction">
    <interactant intactId="EBI-1047093">
        <id>O76011</id>
    </interactant>
    <interactant intactId="EBI-10274247">
        <id>Q8TCT0</id>
        <label>CERK</label>
    </interactant>
    <organismsDiffer>false</organismsDiffer>
    <experiments>3</experiments>
</comment>
<comment type="interaction">
    <interactant intactId="EBI-1047093">
        <id>O76011</id>
    </interactant>
    <interactant intactId="EBI-749051">
        <id>Q8IYR0</id>
        <label>CFAP206</label>
    </interactant>
    <organismsDiffer>false</organismsDiffer>
    <experiments>3</experiments>
</comment>
<comment type="interaction">
    <interactant intactId="EBI-1047093">
        <id>O76011</id>
    </interactant>
    <interactant intactId="EBI-742422">
        <id>Q96M91</id>
        <label>CFAP53</label>
    </interactant>
    <organismsDiffer>false</organismsDiffer>
    <experiments>3</experiments>
</comment>
<comment type="interaction">
    <interactant intactId="EBI-1047093">
        <id>O76011</id>
    </interactant>
    <interactant intactId="EBI-12039847">
        <id>A4QMS7</id>
        <label>CFAP90</label>
    </interactant>
    <organismsDiffer>false</organismsDiffer>
    <experiments>3</experiments>
</comment>
<comment type="interaction">
    <interactant intactId="EBI-1047093">
        <id>O76011</id>
    </interactant>
    <interactant intactId="EBI-947551">
        <id>Q9H2X0</id>
        <label>CHRD</label>
    </interactant>
    <organismsDiffer>false</organismsDiffer>
    <experiments>3</experiments>
</comment>
<comment type="interaction">
    <interactant intactId="EBI-1047093">
        <id>O76011</id>
    </interactant>
    <interactant intactId="EBI-11979451">
        <id>P07510-2</id>
        <label>CHRNG</label>
    </interactant>
    <organismsDiffer>false</organismsDiffer>
    <experiments>3</experiments>
</comment>
<comment type="interaction">
    <interactant intactId="EBI-1047093">
        <id>O76011</id>
    </interactant>
    <interactant intactId="EBI-11980535">
        <id>P51800-3</id>
        <label>CLCNKA</label>
    </interactant>
    <organismsDiffer>false</organismsDiffer>
    <experiments>3</experiments>
</comment>
<comment type="interaction">
    <interactant intactId="EBI-1047093">
        <id>O76011</id>
    </interactant>
    <interactant intactId="EBI-12256978">
        <id>Q8N6F1-2</id>
        <label>CLDN19</label>
    </interactant>
    <organismsDiffer>false</organismsDiffer>
    <experiments>3</experiments>
</comment>
<comment type="interaction">
    <interactant intactId="EBI-1047093">
        <id>O76011</id>
    </interactant>
    <interactant intactId="EBI-10173491">
        <id>A5D8T8</id>
        <label>CLEC18A</label>
    </interactant>
    <organismsDiffer>false</organismsDiffer>
    <experiments>3</experiments>
</comment>
<comment type="interaction">
    <interactant intactId="EBI-1047093">
        <id>O76011</id>
    </interactant>
    <interactant intactId="EBI-10295404">
        <id>Q99895</id>
        <label>CTRC</label>
    </interactant>
    <organismsDiffer>false</organismsDiffer>
    <experiments>3</experiments>
</comment>
<comment type="interaction">
    <interactant intactId="EBI-1047093">
        <id>O76011</id>
    </interactant>
    <interactant intactId="EBI-746052">
        <id>Q9NXE8</id>
        <label>CWC25</label>
    </interactant>
    <organismsDiffer>false</organismsDiffer>
    <experiments>3</experiments>
</comment>
<comment type="interaction">
    <interactant intactId="EBI-1047093">
        <id>O76011</id>
    </interactant>
    <interactant intactId="EBI-3867333">
        <id>A8MQ03</id>
        <label>CYSRT1</label>
    </interactant>
    <organismsDiffer>false</organismsDiffer>
    <experiments>5</experiments>
</comment>
<comment type="interaction">
    <interactant intactId="EBI-1047093">
        <id>O76011</id>
    </interactant>
    <interactant intactId="EBI-11521003">
        <id>Q9UIA0</id>
        <label>CYTH4</label>
    </interactant>
    <organismsDiffer>false</organismsDiffer>
    <experiments>3</experiments>
</comment>
<comment type="interaction">
    <interactant intactId="EBI-1047093">
        <id>O76011</id>
    </interactant>
    <interactant intactId="EBI-12091947">
        <id>O75935-2</id>
        <label>DCTN3</label>
    </interactant>
    <organismsDiffer>false</organismsDiffer>
    <experiments>3</experiments>
</comment>
<comment type="interaction">
    <interactant intactId="EBI-1047093">
        <id>O76011</id>
    </interactant>
    <interactant intactId="EBI-742054">
        <id>Q96D03</id>
        <label>DDIT4L</label>
    </interactant>
    <organismsDiffer>false</organismsDiffer>
    <experiments>3</experiments>
</comment>
<comment type="interaction">
    <interactant intactId="EBI-1047093">
        <id>O76011</id>
    </interactant>
    <interactant intactId="EBI-351257">
        <id>P26196</id>
        <label>DDX6</label>
    </interactant>
    <organismsDiffer>false</organismsDiffer>
    <experiments>5</experiments>
</comment>
<comment type="interaction">
    <interactant intactId="EBI-1047093">
        <id>O76011</id>
    </interactant>
    <interactant intactId="EBI-746300">
        <id>Q96LJ7</id>
        <label>DHRS1</label>
    </interactant>
    <organismsDiffer>false</organismsDiffer>
    <experiments>3</experiments>
</comment>
<comment type="interaction">
    <interactant intactId="EBI-1047093">
        <id>O76011</id>
    </interactant>
    <interactant intactId="EBI-9679045">
        <id>Q9NQL9</id>
        <label>DMRT3</label>
    </interactant>
    <organismsDiffer>false</organismsDiffer>
    <experiments>3</experiments>
</comment>
<comment type="interaction">
    <interactant intactId="EBI-1047093">
        <id>O76011</id>
    </interactant>
    <interactant intactId="EBI-448771">
        <id>Q92608</id>
        <label>DOCK2</label>
    </interactant>
    <organismsDiffer>false</organismsDiffer>
    <experiments>3</experiments>
</comment>
<comment type="interaction">
    <interactant intactId="EBI-1047093">
        <id>O76011</id>
    </interactant>
    <interactant intactId="EBI-11958551">
        <id>Q8N7B9-2</id>
        <label>EFCAB3</label>
    </interactant>
    <organismsDiffer>false</organismsDiffer>
    <experiments>3</experiments>
</comment>
<comment type="interaction">
    <interactant intactId="EBI-1047093">
        <id>O76011</id>
    </interactant>
    <interactant intactId="EBI-12012124">
        <id>Q04637-9</id>
        <label>EIF4G1</label>
    </interactant>
    <organismsDiffer>false</organismsDiffer>
    <experiments>3</experiments>
</comment>
<comment type="interaction">
    <interactant intactId="EBI-1047093">
        <id>O76011</id>
    </interactant>
    <interactant intactId="EBI-946972">
        <id>Q9UM22</id>
        <label>EPDR1</label>
    </interactant>
    <organismsDiffer>false</organismsDiffer>
    <experiments>3</experiments>
</comment>
<comment type="interaction">
    <interactant intactId="EBI-1047093">
        <id>O76011</id>
    </interactant>
    <interactant intactId="EBI-742102">
        <id>Q8IYI6</id>
        <label>EXOC8</label>
    </interactant>
    <organismsDiffer>false</organismsDiffer>
    <experiments>3</experiments>
</comment>
<comment type="interaction">
    <interactant intactId="EBI-1047093">
        <id>O76011</id>
    </interactant>
    <interactant intactId="EBI-371876">
        <id>Q9NQT4</id>
        <label>EXOSC5</label>
    </interactant>
    <organismsDiffer>false</organismsDiffer>
    <experiments>3</experiments>
</comment>
<comment type="interaction">
    <interactant intactId="EBI-1047093">
        <id>O76011</id>
    </interactant>
    <interactant intactId="EBI-1752811">
        <id>Q9BQ89</id>
        <label>FAM110A</label>
    </interactant>
    <organismsDiffer>false</organismsDiffer>
    <experiments>3</experiments>
</comment>
<comment type="interaction">
    <interactant intactId="EBI-1047093">
        <id>O76011</id>
    </interactant>
    <interactant intactId="EBI-742802">
        <id>Q9Y247</id>
        <label>FAM50B</label>
    </interactant>
    <organismsDiffer>false</organismsDiffer>
    <experiments>3</experiments>
</comment>
<comment type="interaction">
    <interactant intactId="EBI-1047093">
        <id>O76011</id>
    </interactant>
    <interactant intactId="EBI-1384254">
        <id>Q86UY5</id>
        <label>FAM83A</label>
    </interactant>
    <organismsDiffer>false</organismsDiffer>
    <experiments>3</experiments>
</comment>
<comment type="interaction">
    <interactant intactId="EBI-1047093">
        <id>O76011</id>
    </interactant>
    <interactant intactId="EBI-6658203">
        <id>Q86YD7</id>
        <label>FAM90A1</label>
    </interactant>
    <organismsDiffer>false</organismsDiffer>
    <experiments>3</experiments>
</comment>
<comment type="interaction">
    <interactant intactId="EBI-1047093">
        <id>O76011</id>
    </interactant>
    <interactant intactId="EBI-2513774">
        <id>O95363</id>
        <label>FARS2</label>
    </interactant>
    <organismsDiffer>false</organismsDiffer>
    <experiments>3</experiments>
</comment>
<comment type="interaction">
    <interactant intactId="EBI-1047093">
        <id>O76011</id>
    </interactant>
    <interactant intactId="EBI-741068">
        <id>Q969U6</id>
        <label>FBXW5</label>
    </interactant>
    <organismsDiffer>false</organismsDiffer>
    <experiments>5</experiments>
</comment>
<comment type="interaction">
    <interactant intactId="EBI-1047093">
        <id>O76011</id>
    </interactant>
    <interactant intactId="EBI-744935">
        <id>Q9BVV2</id>
        <label>FNDC11</label>
    </interactant>
    <organismsDiffer>false</organismsDiffer>
    <experiments>3</experiments>
</comment>
<comment type="interaction">
    <interactant intactId="EBI-1047093">
        <id>O76011</id>
    </interactant>
    <interactant intactId="EBI-11320806">
        <id>Q9NU39</id>
        <label>FOXD4L1</label>
    </interactant>
    <organismsDiffer>false</organismsDiffer>
    <experiments>3</experiments>
</comment>
<comment type="interaction">
    <interactant intactId="EBI-1047093">
        <id>O76011</id>
    </interactant>
    <interactant intactId="EBI-725515">
        <id>O43559</id>
        <label>FRS3</label>
    </interactant>
    <organismsDiffer>false</organismsDiffer>
    <experiments>5</experiments>
</comment>
<comment type="interaction">
    <interactant intactId="EBI-1047093">
        <id>O76011</id>
    </interactant>
    <interactant intactId="EBI-372506">
        <id>Q8TAE8</id>
        <label>GADD45GIP1</label>
    </interactant>
    <organismsDiffer>false</organismsDiffer>
    <experiments>3</experiments>
</comment>
<comment type="interaction">
    <interactant intactId="EBI-1047093">
        <id>O76011</id>
    </interactant>
    <interactant intactId="EBI-752049">
        <id>Q8NEG0</id>
        <label>GARIN6</label>
    </interactant>
    <organismsDiffer>false</organismsDiffer>
    <experiments>3</experiments>
</comment>
<comment type="interaction">
    <interactant intactId="EBI-1047093">
        <id>O76011</id>
    </interactant>
    <interactant intactId="EBI-3436637">
        <id>P01350</id>
        <label>GAST</label>
    </interactant>
    <organismsDiffer>false</organismsDiffer>
    <experiments>3</experiments>
</comment>
<comment type="interaction">
    <interactant intactId="EBI-1047093">
        <id>O76011</id>
    </interactant>
    <interactant intactId="EBI-726224">
        <id>Q86YP4</id>
        <label>GATAD2A</label>
    </interactant>
    <organismsDiffer>false</organismsDiffer>
    <experiments>3</experiments>
</comment>
<comment type="interaction">
    <interactant intactId="EBI-1047093">
        <id>O76011</id>
    </interactant>
    <interactant intactId="EBI-744104">
        <id>P55040</id>
        <label>GEM</label>
    </interactant>
    <organismsDiffer>false</organismsDiffer>
    <experiments>3</experiments>
</comment>
<comment type="interaction">
    <interactant intactId="EBI-1047093">
        <id>O76011</id>
    </interactant>
    <interactant intactId="EBI-748515">
        <id>Q8IVS8</id>
        <label>GLYCTK</label>
    </interactant>
    <organismsDiffer>false</organismsDiffer>
    <experiments>3</experiments>
</comment>
<comment type="interaction">
    <interactant intactId="EBI-1047093">
        <id>O76011</id>
    </interactant>
    <interactant intactId="EBI-11975289">
        <id>Q9Y223-2</id>
        <label>GNE</label>
    </interactant>
    <organismsDiffer>false</organismsDiffer>
    <experiments>3</experiments>
</comment>
<comment type="interaction">
    <interactant intactId="EBI-1047093">
        <id>O76011</id>
    </interactant>
    <interactant intactId="EBI-10211741">
        <id>P50151</id>
        <label>GNG10</label>
    </interactant>
    <organismsDiffer>false</organismsDiffer>
    <experiments>3</experiments>
</comment>
<comment type="interaction">
    <interactant intactId="EBI-1047093">
        <id>O76011</id>
    </interactant>
    <interactant intactId="EBI-11427343">
        <id>Q9P2W3</id>
        <label>GNG13</label>
    </interactant>
    <organismsDiffer>false</organismsDiffer>
    <experiments>3</experiments>
</comment>
<comment type="interaction">
    <interactant intactId="EBI-1047093">
        <id>O76011</id>
    </interactant>
    <interactant intactId="EBI-713355">
        <id>Q13227</id>
        <label>GPS2</label>
    </interactant>
    <organismsDiffer>false</organismsDiffer>
    <experiments>3</experiments>
</comment>
<comment type="interaction">
    <interactant intactId="EBI-1047093">
        <id>O76011</id>
    </interactant>
    <interactant intactId="EBI-747754">
        <id>P28799</id>
        <label>GRN</label>
    </interactant>
    <organismsDiffer>false</organismsDiffer>
    <experiments>3</experiments>
</comment>
<comment type="interaction">
    <interactant intactId="EBI-1047093">
        <id>O76011</id>
    </interactant>
    <interactant intactId="EBI-19954058">
        <id>O15499</id>
        <label>GSC2</label>
    </interactant>
    <organismsDiffer>false</organismsDiffer>
    <experiments>3</experiments>
</comment>
<comment type="interaction">
    <interactant intactId="EBI-1047093">
        <id>O76011</id>
    </interactant>
    <interactant intactId="EBI-353467">
        <id>P09211</id>
        <label>GSTP1</label>
    </interactant>
    <organismsDiffer>false</organismsDiffer>
    <experiments>3</experiments>
</comment>
<comment type="interaction">
    <interactant intactId="EBI-1047093">
        <id>O76011</id>
    </interactant>
    <interactant intactId="EBI-11956675">
        <id>Q9GZV7</id>
        <label>HAPLN2</label>
    </interactant>
    <organismsDiffer>false</organismsDiffer>
    <experiments>5</experiments>
</comment>
<comment type="interaction">
    <interactant intactId="EBI-1047093">
        <id>O76011</id>
    </interactant>
    <interactant intactId="EBI-714680">
        <id>P69905</id>
        <label>HBA2</label>
    </interactant>
    <organismsDiffer>false</organismsDiffer>
    <experiments>3</experiments>
</comment>
<comment type="interaction">
    <interactant intactId="EBI-1047093">
        <id>O76011</id>
    </interactant>
    <interactant intactId="EBI-9834454">
        <id>P08631-2</id>
        <label>HCK</label>
    </interactant>
    <organismsDiffer>false</organismsDiffer>
    <experiments>3</experiments>
</comment>
<comment type="interaction">
    <interactant intactId="EBI-1047093">
        <id>O76011</id>
    </interactant>
    <interactant intactId="EBI-11953488">
        <id>P56524-2</id>
        <label>HDAC4</label>
    </interactant>
    <organismsDiffer>false</organismsDiffer>
    <experiments>3</experiments>
</comment>
<comment type="interaction">
    <interactant intactId="EBI-1047093">
        <id>O76011</id>
    </interactant>
    <interactant intactId="EBI-740220">
        <id>O14964</id>
        <label>HGS</label>
    </interactant>
    <organismsDiffer>false</organismsDiffer>
    <experiments>3</experiments>
</comment>
<comment type="interaction">
    <interactant intactId="EBI-1047093">
        <id>O76011</id>
    </interactant>
    <interactant intactId="EBI-740785">
        <id>P49639</id>
        <label>HOXA1</label>
    </interactant>
    <organismsDiffer>false</organismsDiffer>
    <experiments>3</experiments>
</comment>
<comment type="interaction">
    <interactant intactId="EBI-1047093">
        <id>O76011</id>
    </interactant>
    <interactant intactId="EBI-3893317">
        <id>P09067</id>
        <label>HOXB5</label>
    </interactant>
    <organismsDiffer>false</organismsDiffer>
    <experiments>3</experiments>
</comment>
<comment type="interaction">
    <interactant intactId="EBI-1047093">
        <id>O76011</id>
    </interactant>
    <interactant intactId="EBI-745290">
        <id>P17482</id>
        <label>HOXB9</label>
    </interactant>
    <organismsDiffer>false</organismsDiffer>
    <experiments>3</experiments>
</comment>
<comment type="interaction">
    <interactant intactId="EBI-1047093">
        <id>O76011</id>
    </interactant>
    <interactant intactId="EBI-1752118">
        <id>P31273</id>
        <label>HOXC8</label>
    </interactant>
    <organismsDiffer>false</organismsDiffer>
    <experiments>5</experiments>
</comment>
<comment type="interaction">
    <interactant intactId="EBI-1047093">
        <id>O76011</id>
    </interactant>
    <interactant intactId="EBI-10291310">
        <id>Q96MM6</id>
        <label>HSPA12B</label>
    </interactant>
    <organismsDiffer>false</organismsDiffer>
    <experiments>3</experiments>
</comment>
<comment type="interaction">
    <interactant intactId="EBI-1047093">
        <id>O76011</id>
    </interactant>
    <interactant intactId="EBI-352528">
        <id>P10809</id>
        <label>HSPD1</label>
    </interactant>
    <organismsDiffer>false</organismsDiffer>
    <experiments>3</experiments>
</comment>
<comment type="interaction">
    <interactant intactId="EBI-1047093">
        <id>O76011</id>
    </interactant>
    <interactant intactId="EBI-2806068">
        <id>Q12891</id>
        <label>HYAL2</label>
    </interactant>
    <organismsDiffer>false</organismsDiffer>
    <experiments>3</experiments>
</comment>
<comment type="interaction">
    <interactant intactId="EBI-1047093">
        <id>O76011</id>
    </interactant>
    <interactant intactId="EBI-10233928">
        <id>Q14773-3</id>
        <label>ICAM4</label>
    </interactant>
    <organismsDiffer>false</organismsDiffer>
    <experiments>3</experiments>
</comment>
<comment type="interaction">
    <interactant intactId="EBI-1047093">
        <id>O76011</id>
    </interactant>
    <interactant intactId="EBI-2881520">
        <id>Q9NRY2</id>
        <label>INIP</label>
    </interactant>
    <organismsDiffer>false</organismsDiffer>
    <experiments>3</experiments>
</comment>
<comment type="interaction">
    <interactant intactId="EBI-1047093">
        <id>O76011</id>
    </interactant>
    <interactant intactId="EBI-715611">
        <id>Q9C086</id>
        <label>INO80B</label>
    </interactant>
    <organismsDiffer>false</organismsDiffer>
    <experiments>3</experiments>
</comment>
<comment type="interaction">
    <interactant intactId="EBI-1047093">
        <id>O76011</id>
    </interactant>
    <interactant intactId="EBI-1047335">
        <id>Q9H1K1</id>
        <label>ISCU</label>
    </interactant>
    <organismsDiffer>false</organismsDiffer>
    <experiments>3</experiments>
</comment>
<comment type="interaction">
    <interactant intactId="EBI-1047093">
        <id>O76011</id>
    </interactant>
    <interactant intactId="EBI-1223434">
        <id>P18084</id>
        <label>ITGB5</label>
    </interactant>
    <organismsDiffer>false</organismsDiffer>
    <experiments>3</experiments>
</comment>
<comment type="interaction">
    <interactant intactId="EBI-1047093">
        <id>O76011</id>
    </interactant>
    <interactant intactId="EBI-751388">
        <id>P27987</id>
        <label>ITPKB</label>
    </interactant>
    <organismsDiffer>false</organismsDiffer>
    <experiments>3</experiments>
</comment>
<comment type="interaction">
    <interactant intactId="EBI-1047093">
        <id>O76011</id>
    </interactant>
    <interactant intactId="EBI-2510602">
        <id>Q15040</id>
        <label>JOSD1</label>
    </interactant>
    <organismsDiffer>false</organismsDiffer>
    <experiments>3</experiments>
</comment>
<comment type="interaction">
    <interactant intactId="EBI-1047093">
        <id>O76011</id>
    </interactant>
    <interactant intactId="EBI-2556193">
        <id>Q63ZY3</id>
        <label>KANK2</label>
    </interactant>
    <organismsDiffer>false</organismsDiffer>
    <experiments>3</experiments>
</comment>
<comment type="interaction">
    <interactant intactId="EBI-1047093">
        <id>O76011</id>
    </interactant>
    <interactant intactId="EBI-4397613">
        <id>Q7L273</id>
        <label>KCTD9</label>
    </interactant>
    <organismsDiffer>false</organismsDiffer>
    <experiments>3</experiments>
</comment>
<comment type="interaction">
    <interactant intactId="EBI-1047093">
        <id>O76011</id>
    </interactant>
    <interactant intactId="EBI-1043076">
        <id>P24390</id>
        <label>KDELR1</label>
    </interactant>
    <organismsDiffer>false</organismsDiffer>
    <experiments>3</experiments>
</comment>
<comment type="interaction">
    <interactant intactId="EBI-1047093">
        <id>O76011</id>
    </interactant>
    <interactant intactId="EBI-11046235">
        <id>Q9ULH0-2</id>
        <label>KIDINS220</label>
    </interactant>
    <organismsDiffer>false</organismsDiffer>
    <experiments>3</experiments>
</comment>
<comment type="interaction">
    <interactant intactId="EBI-1047093">
        <id>O76011</id>
    </interactant>
    <interactant intactId="EBI-949319">
        <id>Q9NSK0</id>
        <label>KLC4</label>
    </interactant>
    <organismsDiffer>false</organismsDiffer>
    <experiments>3</experiments>
</comment>
<comment type="interaction">
    <interactant intactId="EBI-1047093">
        <id>O76011</id>
    </interactant>
    <interactant intactId="EBI-6426443">
        <id>Q2WGJ6</id>
        <label>KLHL38</label>
    </interactant>
    <organismsDiffer>false</organismsDiffer>
    <experiments>5</experiments>
</comment>
<comment type="interaction">
    <interactant intactId="EBI-1047093">
        <id>O76011</id>
    </interactant>
    <interactant intactId="EBI-3915857">
        <id>O60259</id>
        <label>KLK8</label>
    </interactant>
    <organismsDiffer>false</organismsDiffer>
    <experiments>3</experiments>
</comment>
<comment type="interaction">
    <interactant intactId="EBI-1047093">
        <id>O76011</id>
    </interactant>
    <interactant intactId="EBI-298429">
        <id>P04264</id>
        <label>KRT1</label>
    </interactant>
    <organismsDiffer>false</organismsDiffer>
    <experiments>3</experiments>
</comment>
<comment type="interaction">
    <interactant intactId="EBI-1047093">
        <id>O76011</id>
    </interactant>
    <interactant intactId="EBI-742094">
        <id>P35900</id>
        <label>KRT20</label>
    </interactant>
    <organismsDiffer>false</organismsDiffer>
    <experiments>3</experiments>
</comment>
<comment type="interaction">
    <interactant intactId="EBI-1047093">
        <id>O76011</id>
    </interactant>
    <interactant intactId="EBI-2430095">
        <id>P12035</id>
        <label>KRT3</label>
    </interactant>
    <organismsDiffer>false</organismsDiffer>
    <experiments>5</experiments>
</comment>
<comment type="interaction">
    <interactant intactId="EBI-1047093">
        <id>O76011</id>
    </interactant>
    <interactant intactId="EBI-702198">
        <id>P02538</id>
        <label>KRT6A</label>
    </interactant>
    <organismsDiffer>false</organismsDiffer>
    <experiments>3</experiments>
</comment>
<comment type="interaction">
    <interactant intactId="EBI-1047093">
        <id>O76011</id>
    </interactant>
    <interactant intactId="EBI-2564105">
        <id>P48668</id>
        <label>KRT6C</label>
    </interactant>
    <organismsDiffer>false</organismsDiffer>
    <experiments>3</experiments>
</comment>
<comment type="interaction">
    <interactant intactId="EBI-1047093">
        <id>O76011</id>
    </interactant>
    <interactant intactId="EBI-2952676">
        <id>Q3SY84</id>
        <label>KRT71</label>
    </interactant>
    <organismsDiffer>false</organismsDiffer>
    <experiments>3</experiments>
</comment>
<comment type="interaction">
    <interactant intactId="EBI-1047093">
        <id>O76011</id>
    </interactant>
    <interactant intactId="EBI-968660">
        <id>Q7RTS7</id>
        <label>KRT74</label>
    </interactant>
    <organismsDiffer>false</organismsDiffer>
    <experiments>3</experiments>
</comment>
<comment type="interaction">
    <interactant intactId="EBI-1047093">
        <id>O76011</id>
    </interactant>
    <interactant intactId="EBI-2949715">
        <id>O95678</id>
        <label>KRT75</label>
    </interactant>
    <organismsDiffer>false</organismsDiffer>
    <experiments>4</experiments>
</comment>
<comment type="interaction">
    <interactant intactId="EBI-1047093">
        <id>O76011</id>
    </interactant>
    <interactant intactId="EBI-1056564">
        <id>Q8N1N4</id>
        <label>KRT78</label>
    </interactant>
    <organismsDiffer>false</organismsDiffer>
    <experiments>3</experiments>
</comment>
<comment type="interaction">
    <interactant intactId="EBI-1047093">
        <id>O76011</id>
    </interactant>
    <interactant intactId="EBI-2514135">
        <id>Q5XKE5</id>
        <label>KRT79</label>
    </interactant>
    <organismsDiffer>false</organismsDiffer>
    <experiments>3</experiments>
</comment>
<comment type="interaction">
    <interactant intactId="EBI-1047093">
        <id>O76011</id>
    </interactant>
    <interactant intactId="EBI-297852">
        <id>P05787</id>
        <label>KRT8</label>
    </interactant>
    <organismsDiffer>false</organismsDiffer>
    <experiments>3</experiments>
</comment>
<comment type="interaction">
    <interactant intactId="EBI-1047093">
        <id>O76011</id>
    </interactant>
    <interactant intactId="EBI-11999246">
        <id>Q6KB66-2</id>
        <label>KRT80</label>
    </interactant>
    <organismsDiffer>false</organismsDiffer>
    <experiments>5</experiments>
</comment>
<comment type="interaction">
    <interactant intactId="EBI-1047093">
        <id>O76011</id>
    </interactant>
    <interactant intactId="EBI-739648">
        <id>Q14533</id>
        <label>KRT81</label>
    </interactant>
    <organismsDiffer>false</organismsDiffer>
    <experiments>3</experiments>
</comment>
<comment type="interaction">
    <interactant intactId="EBI-1047093">
        <id>O76011</id>
    </interactant>
    <interactant intactId="EBI-1045341">
        <id>Q9NSB4</id>
        <label>KRT82</label>
    </interactant>
    <organismsDiffer>false</organismsDiffer>
    <experiments>3</experiments>
</comment>
<comment type="interaction">
    <interactant intactId="EBI-1047093">
        <id>O76011</id>
    </interactant>
    <interactant intactId="EBI-10221390">
        <id>P78385</id>
        <label>KRT83</label>
    </interactant>
    <organismsDiffer>false</organismsDiffer>
    <experiments>3</experiments>
</comment>
<comment type="interaction">
    <interactant intactId="EBI-1047093">
        <id>O76011</id>
    </interactant>
    <interactant intactId="EBI-1049371">
        <id>P78386</id>
        <label>KRT85</label>
    </interactant>
    <organismsDiffer>false</organismsDiffer>
    <experiments>6</experiments>
</comment>
<comment type="interaction">
    <interactant intactId="EBI-1047093">
        <id>O76011</id>
    </interactant>
    <interactant intactId="EBI-9996498">
        <id>O43790</id>
        <label>KRT86</label>
    </interactant>
    <organismsDiffer>false</organismsDiffer>
    <experiments>3</experiments>
</comment>
<comment type="interaction">
    <interactant intactId="EBI-1047093">
        <id>O76011</id>
    </interactant>
    <interactant intactId="EBI-10176379">
        <id>P59991</id>
        <label>KRTAP12-2</label>
    </interactant>
    <organismsDiffer>false</organismsDiffer>
    <experiments>3</experiments>
</comment>
<comment type="interaction">
    <interactant intactId="EBI-1047093">
        <id>O76011</id>
    </interactant>
    <interactant intactId="EBI-1048945">
        <id>Q3LI72</id>
        <label>KRTAP19-5</label>
    </interactant>
    <organismsDiffer>false</organismsDiffer>
    <experiments>3</experiments>
</comment>
<comment type="interaction">
    <interactant intactId="EBI-1047093">
        <id>O76011</id>
    </interactant>
    <interactant intactId="EBI-10241353">
        <id>Q3SYF9</id>
        <label>KRTAP19-7</label>
    </interactant>
    <organismsDiffer>false</organismsDiffer>
    <experiments>3</experiments>
</comment>
<comment type="interaction">
    <interactant intactId="EBI-1047093">
        <id>O76011</id>
    </interactant>
    <interactant intactId="EBI-3957672">
        <id>Q6PEX3</id>
        <label>KRTAP26-1</label>
    </interactant>
    <organismsDiffer>false</organismsDiffer>
    <experiments>3</experiments>
</comment>
<comment type="interaction">
    <interactant intactId="EBI-1047093">
        <id>O76011</id>
    </interactant>
    <interactant intactId="EBI-11959475">
        <id>P25791-3</id>
        <label>LMO2</label>
    </interactant>
    <organismsDiffer>false</organismsDiffer>
    <experiments>3</experiments>
</comment>
<comment type="interaction">
    <interactant intactId="EBI-1047093">
        <id>O76011</id>
    </interactant>
    <interactant intactId="EBI-2798728">
        <id>P61968</id>
        <label>LMO4</label>
    </interactant>
    <organismsDiffer>false</organismsDiffer>
    <experiments>5</experiments>
</comment>
<comment type="interaction">
    <interactant intactId="EBI-1047093">
        <id>O76011</id>
    </interactant>
    <interactant intactId="EBI-721408">
        <id>Q15345</id>
        <label>LRRC41</label>
    </interactant>
    <organismsDiffer>false</organismsDiffer>
    <experiments>3</experiments>
</comment>
<comment type="interaction">
    <interactant intactId="EBI-1047093">
        <id>O76011</id>
    </interactant>
    <interactant intactId="EBI-10293291">
        <id>Q96S90</id>
        <label>LYSMD1</label>
    </interactant>
    <organismsDiffer>false</organismsDiffer>
    <experiments>3</experiments>
</comment>
<comment type="interaction">
    <interactant intactId="EBI-1047093">
        <id>O76011</id>
    </interactant>
    <interactant intactId="EBI-10329546">
        <id>Q9Y5Y7</id>
        <label>LYVE1</label>
    </interactant>
    <organismsDiffer>false</organismsDiffer>
    <experiments>3</experiments>
</comment>
<comment type="interaction">
    <interactant intactId="EBI-1047093">
        <id>O76011</id>
    </interactant>
    <interactant intactId="EBI-6659161">
        <id>Q9Y586</id>
        <label>MAB21L2</label>
    </interactant>
    <organismsDiffer>false</organismsDiffer>
    <experiments>3</experiments>
</comment>
<comment type="interaction">
    <interactant intactId="EBI-1047093">
        <id>O76011</id>
    </interactant>
    <interactant intactId="EBI-77889">
        <id>Q9UI95</id>
        <label>MAD2L2</label>
    </interactant>
    <organismsDiffer>false</organismsDiffer>
    <experiments>3</experiments>
</comment>
<comment type="interaction">
    <interactant intactId="EBI-1047093">
        <id>O76011</id>
    </interactant>
    <interactant intactId="EBI-10215880">
        <id>P57077-4</id>
        <label>MAP3K7CL</label>
    </interactant>
    <organismsDiffer>false</organismsDiffer>
    <experiments>3</experiments>
</comment>
<comment type="interaction">
    <interactant intactId="EBI-1047093">
        <id>O76011</id>
    </interactant>
    <interactant intactId="EBI-947402">
        <id>O60336</id>
        <label>MAPKBP1</label>
    </interactant>
    <organismsDiffer>false</organismsDiffer>
    <experiments>3</experiments>
</comment>
<comment type="interaction">
    <interactant intactId="EBI-1047093">
        <id>O76011</id>
    </interactant>
    <interactant intactId="EBI-352602">
        <id>P43243</id>
        <label>MATR3</label>
    </interactant>
    <organismsDiffer>false</organismsDiffer>
    <experiments>3</experiments>
</comment>
<comment type="interaction">
    <interactant intactId="EBI-1047093">
        <id>O76011</id>
    </interactant>
    <interactant intactId="EBI-11989378">
        <id>Q8NHZ7</id>
        <label>MBD3L2</label>
    </interactant>
    <organismsDiffer>false</organismsDiffer>
    <experiments>3</experiments>
</comment>
<comment type="interaction">
    <interactant intactId="EBI-1047093">
        <id>O76011</id>
    </interactant>
    <interactant intactId="EBI-11098807">
        <id>Q9H7H0-2</id>
        <label>METTL17</label>
    </interactant>
    <organismsDiffer>false</organismsDiffer>
    <experiments>3</experiments>
</comment>
<comment type="interaction">
    <interactant intactId="EBI-1047093">
        <id>O76011</id>
    </interactant>
    <interactant intactId="EBI-7153979">
        <id>Q504T8</id>
        <label>MIDN</label>
    </interactant>
    <organismsDiffer>false</organismsDiffer>
    <experiments>3</experiments>
</comment>
<comment type="interaction">
    <interactant intactId="EBI-1047093">
        <id>O76011</id>
    </interactant>
    <interactant intactId="EBI-2801965">
        <id>Q5JXC2</id>
        <label>MIIP</label>
    </interactant>
    <organismsDiffer>false</organismsDiffer>
    <experiments>3</experiments>
</comment>
<comment type="interaction">
    <interactant intactId="EBI-1047093">
        <id>O76011</id>
    </interactant>
    <interactant intactId="EBI-2340269">
        <id>Q13064</id>
        <label>MKRN3</label>
    </interactant>
    <organismsDiffer>false</organismsDiffer>
    <experiments>3</experiments>
</comment>
<comment type="interaction">
    <interactant intactId="EBI-1047093">
        <id>O76011</id>
    </interactant>
    <interactant intactId="EBI-743811">
        <id>Q8NEH6</id>
        <label>MNS1</label>
    </interactant>
    <organismsDiffer>false</organismsDiffer>
    <experiments>3</experiments>
</comment>
<comment type="interaction">
    <interactant intactId="EBI-1047093">
        <id>O76011</id>
    </interactant>
    <interactant intactId="EBI-1757866">
        <id>P00540</id>
        <label>MOS</label>
    </interactant>
    <organismsDiffer>false</organismsDiffer>
    <experiments>3</experiments>
</comment>
<comment type="interaction">
    <interactant intactId="EBI-1047093">
        <id>O76011</id>
    </interactant>
    <interactant intactId="EBI-10699187">
        <id>Q8IXL7-2</id>
        <label>MSRB3</label>
    </interactant>
    <organismsDiffer>false</organismsDiffer>
    <experiments>3</experiments>
</comment>
<comment type="interaction">
    <interactant intactId="EBI-1047093">
        <id>O76011</id>
    </interactant>
    <interactant intactId="EBI-7950783">
        <id>Q96JP2</id>
        <label>MYO15B</label>
    </interactant>
    <organismsDiffer>false</organismsDiffer>
    <experiments>3</experiments>
</comment>
<comment type="interaction">
    <interactant intactId="EBI-1047093">
        <id>O76011</id>
    </interactant>
    <interactant intactId="EBI-744402">
        <id>Q9NP98</id>
        <label>MYOZ1</label>
    </interactant>
    <organismsDiffer>false</organismsDiffer>
    <experiments>3</experiments>
</comment>
<comment type="interaction">
    <interactant intactId="EBI-1047093">
        <id>O76011</id>
    </interactant>
    <interactant intactId="EBI-5662487">
        <id>Q8TDC0</id>
        <label>MYOZ3</label>
    </interactant>
    <organismsDiffer>false</organismsDiffer>
    <experiments>3</experiments>
</comment>
<comment type="interaction">
    <interactant intactId="EBI-1047093">
        <id>O76011</id>
    </interactant>
    <interactant intactId="EBI-8641936">
        <id>Q15742</id>
        <label>NAB2</label>
    </interactant>
    <organismsDiffer>false</organismsDiffer>
    <experiments>3</experiments>
</comment>
<comment type="interaction">
    <interactant intactId="EBI-1047093">
        <id>O76011</id>
    </interactant>
    <interactant intactId="EBI-8650724">
        <id>Q8IW45</id>
        <label>NAXD</label>
    </interactant>
    <organismsDiffer>false</organismsDiffer>
    <experiments>3</experiments>
</comment>
<comment type="interaction">
    <interactant intactId="EBI-1047093">
        <id>O76011</id>
    </interactant>
    <interactant intactId="EBI-11750983">
        <id>Q9HC98-4</id>
        <label>NEK6</label>
    </interactant>
    <organismsDiffer>false</organismsDiffer>
    <experiments>3</experiments>
</comment>
<comment type="interaction">
    <interactant intactId="EBI-1047093">
        <id>O76011</id>
    </interactant>
    <interactant intactId="EBI-10271199">
        <id>Q8NI38</id>
        <label>NFKBID</label>
    </interactant>
    <organismsDiffer>false</organismsDiffer>
    <experiments>3</experiments>
</comment>
<comment type="interaction">
    <interactant intactId="EBI-1047093">
        <id>O76011</id>
    </interactant>
    <interactant intactId="EBI-10210351">
        <id>P48645</id>
        <label>NMU</label>
    </interactant>
    <organismsDiffer>false</organismsDiffer>
    <experiments>3</experiments>
</comment>
<comment type="interaction">
    <interactant intactId="EBI-1047093">
        <id>O76011</id>
    </interactant>
    <interactant intactId="EBI-17490746">
        <id>A8MTQ0</id>
        <label>NOTO</label>
    </interactant>
    <organismsDiffer>false</organismsDiffer>
    <experiments>3</experiments>
</comment>
<comment type="interaction">
    <interactant intactId="EBI-1047093">
        <id>O76011</id>
    </interactant>
    <interactant intactId="EBI-10210114">
        <id>P48146</id>
        <label>NPBWR2</label>
    </interactant>
    <organismsDiffer>false</organismsDiffer>
    <experiments>3</experiments>
</comment>
<comment type="interaction">
    <interactant intactId="EBI-1047093">
        <id>O76011</id>
    </interactant>
    <interactant intactId="EBI-14488689">
        <id>O15504-2</id>
        <label>NUP42</label>
    </interactant>
    <organismsDiffer>false</organismsDiffer>
    <experiments>3</experiments>
</comment>
<comment type="interaction">
    <interactant intactId="EBI-1047093">
        <id>O76011</id>
    </interactant>
    <interactant intactId="EBI-1753251">
        <id>Q99572</id>
        <label>P2RX7</label>
    </interactant>
    <organismsDiffer>false</organismsDiffer>
    <experiments>3</experiments>
</comment>
<comment type="interaction">
    <interactant intactId="EBI-1047093">
        <id>O76011</id>
    </interactant>
    <interactant intactId="EBI-11524542">
        <id>O76083-2</id>
        <label>PDE9A</label>
    </interactant>
    <organismsDiffer>false</organismsDiffer>
    <experiments>5</experiments>
</comment>
<comment type="interaction">
    <interactant intactId="EBI-1047093">
        <id>O76011</id>
    </interactant>
    <interactant intactId="EBI-641237">
        <id>P09619</id>
        <label>PDGFRB</label>
    </interactant>
    <organismsDiffer>false</organismsDiffer>
    <experiments>3</experiments>
</comment>
<comment type="interaction">
    <interactant intactId="EBI-1047093">
        <id>O76011</id>
    </interactant>
    <interactant intactId="EBI-12339509">
        <id>Q96LB9</id>
        <label>PGLYRP3</label>
    </interactant>
    <organismsDiffer>false</organismsDiffer>
    <experiments>3</experiments>
</comment>
<comment type="interaction">
    <interactant intactId="EBI-1047093">
        <id>O76011</id>
    </interactant>
    <interactant intactId="EBI-714158">
        <id>Q13526</id>
        <label>PIN1</label>
    </interactant>
    <organismsDiffer>false</organismsDiffer>
    <experiments>3</experiments>
</comment>
<comment type="interaction">
    <interactant intactId="EBI-1047093">
        <id>O76011</id>
    </interactant>
    <interactant intactId="EBI-748265">
        <id>P78337</id>
        <label>PITX1</label>
    </interactant>
    <organismsDiffer>false</organismsDiffer>
    <experiments>3</experiments>
</comment>
<comment type="interaction">
    <interactant intactId="EBI-1047093">
        <id>O76011</id>
    </interactant>
    <interactant intactId="EBI-12138495">
        <id>Q99697-2</id>
        <label>PITX2</label>
    </interactant>
    <organismsDiffer>false</organismsDiffer>
    <experiments>3</experiments>
</comment>
<comment type="interaction">
    <interactant intactId="EBI-1047093">
        <id>O76011</id>
    </interactant>
    <interactant intactId="EBI-602382">
        <id>Q16512</id>
        <label>PKN1</label>
    </interactant>
    <organismsDiffer>false</organismsDiffer>
    <experiments>5</experiments>
</comment>
<comment type="interaction">
    <interactant intactId="EBI-1047093">
        <id>O76011</id>
    </interactant>
    <interactant intactId="EBI-3919291">
        <id>Q9Y342</id>
        <label>PLLP</label>
    </interactant>
    <organismsDiffer>false</organismsDiffer>
    <experiments>3</experiments>
</comment>
<comment type="interaction">
    <interactant intactId="EBI-1047093">
        <id>O76011</id>
    </interactant>
    <interactant intactId="EBI-366525">
        <id>Q969H6</id>
        <label>POP5</label>
    </interactant>
    <organismsDiffer>false</organismsDiffer>
    <experiments>3</experiments>
</comment>
<comment type="interaction">
    <interactant intactId="EBI-1047093">
        <id>O76011</id>
    </interactant>
    <interactant intactId="EBI-2557469">
        <id>Q6NYC8</id>
        <label>PPP1R18</label>
    </interactant>
    <organismsDiffer>false</organismsDiffer>
    <experiments>3</experiments>
</comment>
<comment type="interaction">
    <interactant intactId="EBI-1047093">
        <id>O76011</id>
    </interactant>
    <interactant intactId="EBI-5235602">
        <id>Q86WC6</id>
        <label>PPP1R27</label>
    </interactant>
    <organismsDiffer>false</organismsDiffer>
    <experiments>3</experiments>
</comment>
<comment type="interaction">
    <interactant intactId="EBI-1047093">
        <id>O76011</id>
    </interactant>
    <interactant intactId="EBI-2798416">
        <id>Q99633</id>
        <label>PRPF18</label>
    </interactant>
    <organismsDiffer>false</organismsDiffer>
    <experiments>3</experiments>
</comment>
<comment type="interaction">
    <interactant intactId="EBI-1047093">
        <id>O76011</id>
    </interactant>
    <interactant intactId="EBI-1567797">
        <id>Q8WWY3</id>
        <label>PRPF31</label>
    </interactant>
    <organismsDiffer>false</organismsDiffer>
    <experiments>3</experiments>
</comment>
<comment type="interaction">
    <interactant intactId="EBI-1047093">
        <id>O76011</id>
    </interactant>
    <interactant intactId="EBI-11998870">
        <id>A6NJB7-2</id>
        <label>PRR19</label>
    </interactant>
    <organismsDiffer>false</organismsDiffer>
    <experiments>6</experiments>
</comment>
<comment type="interaction">
    <interactant intactId="EBI-1047093">
        <id>O76011</id>
    </interactant>
    <interactant intactId="EBI-11986293">
        <id>P0CG20</id>
        <label>PRR35</label>
    </interactant>
    <organismsDiffer>false</organismsDiffer>
    <experiments>5</experiments>
</comment>
<comment type="interaction">
    <interactant intactId="EBI-1047093">
        <id>O76011</id>
    </interactant>
    <interactant intactId="EBI-359352">
        <id>P25786</id>
        <label>PSMA1</label>
    </interactant>
    <organismsDiffer>false</organismsDiffer>
    <experiments>3</experiments>
</comment>
<comment type="interaction">
    <interactant intactId="EBI-1047093">
        <id>O76011</id>
    </interactant>
    <interactant intactId="EBI-372273">
        <id>P20618</id>
        <label>PSMB1</label>
    </interactant>
    <organismsDiffer>false</organismsDiffer>
    <experiments>3</experiments>
</comment>
<comment type="interaction">
    <interactant intactId="EBI-1047093">
        <id>O76011</id>
    </interactant>
    <interactant intactId="EBI-7199479">
        <id>Q8WUK0</id>
        <label>PTPMT1</label>
    </interactant>
    <organismsDiffer>false</organismsDiffer>
    <experiments>3</experiments>
</comment>
<comment type="interaction">
    <interactant intactId="EBI-1047093">
        <id>O76011</id>
    </interactant>
    <interactant intactId="EBI-948428">
        <id>Q9Y2K5</id>
        <label>R3HDM2</label>
    </interactant>
    <organismsDiffer>false</organismsDiffer>
    <experiments>3</experiments>
</comment>
<comment type="interaction">
    <interactant intactId="EBI-1047093">
        <id>O76011</id>
    </interactant>
    <interactant intactId="EBI-744685">
        <id>Q14088</id>
        <label>RAB33A</label>
    </interactant>
    <organismsDiffer>false</organismsDiffer>
    <experiments>3</experiments>
</comment>
<comment type="interaction">
    <interactant intactId="EBI-1047093">
        <id>O76011</id>
    </interactant>
    <interactant intactId="EBI-743796">
        <id>Q8TBN0</id>
        <label>RAB3IL1</label>
    </interactant>
    <organismsDiffer>false</organismsDiffer>
    <experiments>3</experiments>
</comment>
<comment type="interaction">
    <interactant intactId="EBI-1047093">
        <id>O76011</id>
    </interactant>
    <interactant intactId="EBI-740818">
        <id>Q9Y272</id>
        <label>RASD1</label>
    </interactant>
    <organismsDiffer>false</organismsDiffer>
    <experiments>3</experiments>
</comment>
<comment type="interaction">
    <interactant intactId="EBI-1047093">
        <id>O76011</id>
    </interactant>
    <interactant intactId="EBI-712376">
        <id>P40937</id>
        <label>RFC5</label>
    </interactant>
    <organismsDiffer>false</organismsDiffer>
    <experiments>3</experiments>
</comment>
<comment type="interaction">
    <interactant intactId="EBI-1047093">
        <id>O76011</id>
    </interactant>
    <interactant intactId="EBI-366017">
        <id>Q13671</id>
        <label>RIN1</label>
    </interactant>
    <organismsDiffer>false</organismsDiffer>
    <experiments>3</experiments>
</comment>
<comment type="interaction">
    <interactant intactId="EBI-1047093">
        <id>O76011</id>
    </interactant>
    <interactant intactId="EBI-10226430">
        <id>Q0D2K3</id>
        <label>RIPPLY1</label>
    </interactant>
    <organismsDiffer>false</organismsDiffer>
    <experiments>3</experiments>
</comment>
<comment type="interaction">
    <interactant intactId="EBI-1047093">
        <id>O76011</id>
    </interactant>
    <interactant intactId="EBI-10217913">
        <id>Q14D33</id>
        <label>RTP5</label>
    </interactant>
    <organismsDiffer>false</organismsDiffer>
    <experiments>3</experiments>
</comment>
<comment type="interaction">
    <interactant intactId="EBI-1047093">
        <id>O76011</id>
    </interactant>
    <interactant intactId="EBI-14067109">
        <id>Q96NU1</id>
        <label>SAMD11</label>
    </interactant>
    <organismsDiffer>false</organismsDiffer>
    <experiments>3</experiments>
</comment>
<comment type="interaction">
    <interactant intactId="EBI-1047093">
        <id>O76011</id>
    </interactant>
    <interactant intactId="EBI-748391">
        <id>Q9BWG6</id>
        <label>SCNM1</label>
    </interactant>
    <organismsDiffer>false</organismsDiffer>
    <experiments>5</experiments>
</comment>
<comment type="interaction">
    <interactant intactId="EBI-1047093">
        <id>O76011</id>
    </interactant>
    <interactant intactId="EBI-10320311">
        <id>Q9UDX3</id>
        <label>SEC14L4</label>
    </interactant>
    <organismsDiffer>false</organismsDiffer>
    <experiments>3</experiments>
</comment>
<comment type="interaction">
    <interactant intactId="EBI-1047093">
        <id>O76011</id>
    </interactant>
    <interactant intactId="EBI-10303490">
        <id>Q9C0C4</id>
        <label>SEMA4C</label>
    </interactant>
    <organismsDiffer>false</organismsDiffer>
    <experiments>3</experiments>
</comment>
<comment type="interaction">
    <interactant intactId="EBI-1047093">
        <id>O76011</id>
    </interactant>
    <interactant intactId="EBI-79084">
        <id>Q92529</id>
        <label>SHC3</label>
    </interactant>
    <organismsDiffer>false</organismsDiffer>
    <experiments>3</experiments>
</comment>
<comment type="interaction">
    <interactant intactId="EBI-1047093">
        <id>O76011</id>
    </interactant>
    <interactant intactId="EBI-12806032">
        <id>Q16348</id>
        <label>SLC15A2</label>
    </interactant>
    <organismsDiffer>false</organismsDiffer>
    <experiments>3</experiments>
</comment>
<comment type="interaction">
    <interactant intactId="EBI-1047093">
        <id>O76011</id>
    </interactant>
    <interactant intactId="EBI-9846338">
        <id>O76082</id>
        <label>SLC22A5</label>
    </interactant>
    <organismsDiffer>false</organismsDiffer>
    <experiments>3</experiments>
</comment>
<comment type="interaction">
    <interactant intactId="EBI-1047093">
        <id>O76011</id>
    </interactant>
    <interactant intactId="EBI-11998660">
        <id>Q9UHI7-3</id>
        <label>SLC23A1</label>
    </interactant>
    <organismsDiffer>false</organismsDiffer>
    <experiments>3</experiments>
</comment>
<comment type="interaction">
    <interactant intactId="EBI-1047093">
        <id>O76011</id>
    </interactant>
    <interactant intactId="EBI-6598313">
        <id>Q86VD7</id>
        <label>SLC25A42</label>
    </interactant>
    <organismsDiffer>false</organismsDiffer>
    <experiments>3</experiments>
</comment>
<comment type="interaction">
    <interactant intactId="EBI-1047093">
        <id>O76011</id>
    </interactant>
    <interactant intactId="EBI-358489">
        <id>Q96GM5</id>
        <label>SMARCD1</label>
    </interactant>
    <organismsDiffer>false</organismsDiffer>
    <experiments>3</experiments>
</comment>
<comment type="interaction">
    <interactant intactId="EBI-1047093">
        <id>O76011</id>
    </interactant>
    <interactant intactId="EBI-455078">
        <id>Q969G3</id>
        <label>SMARCE1</label>
    </interactant>
    <organismsDiffer>false</organismsDiffer>
    <experiments>3</experiments>
</comment>
<comment type="interaction">
    <interactant intactId="EBI-1047093">
        <id>O76011</id>
    </interactant>
    <interactant intactId="EBI-750494">
        <id>P49901</id>
        <label>SMCP</label>
    </interactant>
    <organismsDiffer>false</organismsDiffer>
    <experiments>3</experiments>
</comment>
<comment type="interaction">
    <interactant intactId="EBI-1047093">
        <id>O76011</id>
    </interactant>
    <interactant intactId="EBI-2872322">
        <id>Q9H0W8</id>
        <label>SMG9</label>
    </interactant>
    <organismsDiffer>false</organismsDiffer>
    <experiments>5</experiments>
</comment>
<comment type="interaction">
    <interactant intactId="EBI-1047093">
        <id>O76011</id>
    </interactant>
    <interactant intactId="EBI-372475">
        <id>P14678-2</id>
        <label>SNRPB</label>
    </interactant>
    <organismsDiffer>false</organismsDiffer>
    <experiments>3</experiments>
</comment>
<comment type="interaction">
    <interactant intactId="EBI-1047093">
        <id>O76011</id>
    </interactant>
    <interactant intactId="EBI-11959123">
        <id>Q99932-2</id>
        <label>SPAG8</label>
    </interactant>
    <organismsDiffer>false</organismsDiffer>
    <experiments>3</experiments>
</comment>
<comment type="interaction">
    <interactant intactId="EBI-1047093">
        <id>O76011</id>
    </interactant>
    <interactant intactId="EBI-750105">
        <id>Q5T0L3</id>
        <label>SPATA46</label>
    </interactant>
    <organismsDiffer>false</organismsDiffer>
    <experiments>3</experiments>
</comment>
<comment type="interaction">
    <interactant intactId="EBI-1047093">
        <id>O76011</id>
    </interactant>
    <interactant intactId="EBI-12290641">
        <id>O43610</id>
        <label>SPRY3</label>
    </interactant>
    <organismsDiffer>false</organismsDiffer>
    <experiments>3</experiments>
</comment>
<comment type="interaction">
    <interactant intactId="EBI-1047093">
        <id>O76011</id>
    </interactant>
    <interactant intactId="EBI-725557">
        <id>Q9NZ72</id>
        <label>STMN3</label>
    </interactant>
    <organismsDiffer>false</organismsDiffer>
    <experiments>3</experiments>
</comment>
<comment type="interaction">
    <interactant intactId="EBI-1047093">
        <id>O76011</id>
    </interactant>
    <interactant intactId="EBI-3921347">
        <id>P51687</id>
        <label>SUOX</label>
    </interactant>
    <organismsDiffer>false</organismsDiffer>
    <experiments>3</experiments>
</comment>
<comment type="interaction">
    <interactant intactId="EBI-1047093">
        <id>O76011</id>
    </interactant>
    <interactant intactId="EBI-747797">
        <id>Q9BSH4</id>
        <label>TACO1</label>
    </interactant>
    <organismsDiffer>false</organismsDiffer>
    <experiments>3</experiments>
</comment>
<comment type="interaction">
    <interactant intactId="EBI-1047093">
        <id>O76011</id>
    </interactant>
    <interactant intactId="EBI-12017416">
        <id>Q9BX59</id>
        <label>TAPBPL</label>
    </interactant>
    <organismsDiffer>false</organismsDiffer>
    <experiments>3</experiments>
</comment>
<comment type="interaction">
    <interactant intactId="EBI-1047093">
        <id>O76011</id>
    </interactant>
    <interactant intactId="EBI-8787464">
        <id>Q9NU19</id>
        <label>TBC1D22B</label>
    </interactant>
    <organismsDiffer>false</organismsDiffer>
    <experiments>3</experiments>
</comment>
<comment type="interaction">
    <interactant intactId="EBI-1047093">
        <id>O76011</id>
    </interactant>
    <interactant intactId="EBI-740781">
        <id>Q9BT92</id>
        <label>TCHP</label>
    </interactant>
    <organismsDiffer>false</organismsDiffer>
    <experiments>3</experiments>
</comment>
<comment type="interaction">
    <interactant intactId="EBI-1047093">
        <id>O76011</id>
    </interactant>
    <interactant intactId="EBI-8644516">
        <id>Q9BXF9</id>
        <label>TEKT3</label>
    </interactant>
    <organismsDiffer>false</organismsDiffer>
    <experiments>3</experiments>
</comment>
<comment type="interaction">
    <interactant intactId="EBI-1047093">
        <id>O76011</id>
    </interactant>
    <interactant intactId="EBI-750487">
        <id>Q8WW24</id>
        <label>TEKT4</label>
    </interactant>
    <organismsDiffer>false</organismsDiffer>
    <experiments>5</experiments>
</comment>
<comment type="interaction">
    <interactant intactId="EBI-1047093">
        <id>O76011</id>
    </interactant>
    <interactant intactId="EBI-752030">
        <id>Q96A09</id>
        <label>TENT5B</label>
    </interactant>
    <organismsDiffer>false</organismsDiffer>
    <experiments>3</experiments>
</comment>
<comment type="interaction">
    <interactant intactId="EBI-1047093">
        <id>O76011</id>
    </interactant>
    <interactant intactId="EBI-11139477">
        <id>Q96N21</id>
        <label>TEPSIN</label>
    </interactant>
    <organismsDiffer>false</organismsDiffer>
    <experiments>3</experiments>
</comment>
<comment type="interaction">
    <interactant intactId="EBI-1047093">
        <id>O76011</id>
    </interactant>
    <interactant intactId="EBI-11952651">
        <id>Q7Z6R9</id>
        <label>TFAP2D</label>
    </interactant>
    <organismsDiffer>false</organismsDiffer>
    <experiments>3</experiments>
</comment>
<comment type="interaction">
    <interactant intactId="EBI-1047093">
        <id>O76011</id>
    </interactant>
    <interactant intactId="EBI-741350">
        <id>Q9BT49</id>
        <label>THAP7</label>
    </interactant>
    <organismsDiffer>false</organismsDiffer>
    <experiments>3</experiments>
</comment>
<comment type="interaction">
    <interactant intactId="EBI-1047093">
        <id>O76011</id>
    </interactant>
    <interactant intactId="EBI-11741437">
        <id>Q08117-2</id>
        <label>TLE5</label>
    </interactant>
    <organismsDiffer>false</organismsDiffer>
    <experiments>3</experiments>
</comment>
<comment type="interaction">
    <interactant intactId="EBI-1047093">
        <id>O76011</id>
    </interactant>
    <interactant intactId="EBI-3939165">
        <id>O43711</id>
        <label>TLX3</label>
    </interactant>
    <organismsDiffer>false</organismsDiffer>
    <experiments>3</experiments>
</comment>
<comment type="interaction">
    <interactant intactId="EBI-1047093">
        <id>O76011</id>
    </interactant>
    <interactant intactId="EBI-10276729">
        <id>Q8WUU8</id>
        <label>TMEM174</label>
    </interactant>
    <organismsDiffer>false</organismsDiffer>
    <experiments>3</experiments>
</comment>
<comment type="interaction">
    <interactant intactId="EBI-1047093">
        <id>O76011</id>
    </interactant>
    <interactant intactId="EBI-712598">
        <id>P62328</id>
        <label>TMSB4X</label>
    </interactant>
    <organismsDiffer>false</organismsDiffer>
    <experiments>3</experiments>
</comment>
<comment type="interaction">
    <interactant intactId="EBI-1047093">
        <id>O76011</id>
    </interactant>
    <interactant intactId="EBI-5235829">
        <id>Q8IWZ5</id>
        <label>TRIM42</label>
    </interactant>
    <organismsDiffer>false</organismsDiffer>
    <experiments>3</experiments>
</comment>
<comment type="interaction">
    <interactant intactId="EBI-1047093">
        <id>O76011</id>
    </interactant>
    <interactant intactId="EBI-10259086">
        <id>Q86UV6-2</id>
        <label>TRIM74</label>
    </interactant>
    <organismsDiffer>false</organismsDiffer>
    <experiments>3</experiments>
</comment>
<comment type="interaction">
    <interactant intactId="EBI-1047093">
        <id>O76011</id>
    </interactant>
    <interactant intactId="EBI-11059915">
        <id>Q8N7C3</id>
        <label>TRIML2</label>
    </interactant>
    <organismsDiffer>false</organismsDiffer>
    <experiments>3</experiments>
</comment>
<comment type="interaction">
    <interactant intactId="EBI-1047093">
        <id>O76011</id>
    </interactant>
    <interactant intactId="EBI-346882">
        <id>Q99816</id>
        <label>TSG101</label>
    </interactant>
    <organismsDiffer>false</organismsDiffer>
    <experiments>5</experiments>
</comment>
<comment type="interaction">
    <interactant intactId="EBI-1047093">
        <id>O76011</id>
    </interactant>
    <interactant intactId="EBI-9090990">
        <id>Q5W5X9-3</id>
        <label>TTC23</label>
    </interactant>
    <organismsDiffer>false</organismsDiffer>
    <experiments>3</experiments>
</comment>
<comment type="interaction">
    <interactant intactId="EBI-1047093">
        <id>O76011</id>
    </interactant>
    <interactant intactId="EBI-2851213">
        <id>Q8N5M4</id>
        <label>TTC9C</label>
    </interactant>
    <organismsDiffer>false</organismsDiffer>
    <experiments>3</experiments>
</comment>
<comment type="interaction">
    <interactant intactId="EBI-1047093">
        <id>O76011</id>
    </interactant>
    <interactant intactId="EBI-11988865">
        <id>A5PKU2</id>
        <label>TUSC5</label>
    </interactant>
    <organismsDiffer>false</organismsDiffer>
    <experiments>3</experiments>
</comment>
<comment type="interaction">
    <interactant intactId="EBI-1047093">
        <id>O76011</id>
    </interactant>
    <interactant intactId="EBI-359793">
        <id>P40222</id>
        <label>TXLNA</label>
    </interactant>
    <organismsDiffer>false</organismsDiffer>
    <experiments>4</experiments>
</comment>
<comment type="interaction">
    <interactant intactId="EBI-1047093">
        <id>O76011</id>
    </interactant>
    <interactant intactId="EBI-6116822">
        <id>Q8N3L3</id>
        <label>TXLNB</label>
    </interactant>
    <organismsDiffer>false</organismsDiffer>
    <experiments>3</experiments>
</comment>
<comment type="interaction">
    <interactant intactId="EBI-1047093">
        <id>O76011</id>
    </interactant>
    <interactant intactId="EBI-743272">
        <id>O75604</id>
        <label>USP2</label>
    </interactant>
    <organismsDiffer>false</organismsDiffer>
    <experiments>3</experiments>
</comment>
<comment type="interaction">
    <interactant intactId="EBI-1047093">
        <id>O76011</id>
    </interactant>
    <interactant intactId="EBI-11737646">
        <id>Q5TAP6</id>
        <label>UTP14C</label>
    </interactant>
    <organismsDiffer>false</organismsDiffer>
    <experiments>3</experiments>
</comment>
<comment type="interaction">
    <interactant intactId="EBI-1047093">
        <id>O76011</id>
    </interactant>
    <interactant intactId="EBI-5457544">
        <id>Q9BRU9</id>
        <label>UTP23</label>
    </interactant>
    <organismsDiffer>false</organismsDiffer>
    <experiments>3</experiments>
</comment>
<comment type="interaction">
    <interactant intactId="EBI-1047093">
        <id>O76011</id>
    </interactant>
    <interactant intactId="EBI-10191303">
        <id>O95231</id>
        <label>VENTX</label>
    </interactant>
    <organismsDiffer>false</organismsDiffer>
    <experiments>4</experiments>
</comment>
<comment type="interaction">
    <interactant intactId="EBI-1047093">
        <id>O76011</id>
    </interactant>
    <interactant intactId="EBI-12032042">
        <id>Q64LD2-2</id>
        <label>WDR25</label>
    </interactant>
    <organismsDiffer>false</organismsDiffer>
    <experiments>3</experiments>
</comment>
<comment type="interaction">
    <interactant intactId="EBI-1047093">
        <id>O76011</id>
    </interactant>
    <interactant intactId="EBI-12040603">
        <id>Q9NZC7-5</id>
        <label>WWOX</label>
    </interactant>
    <organismsDiffer>false</organismsDiffer>
    <experiments>3</experiments>
</comment>
<comment type="interaction">
    <interactant intactId="EBI-1047093">
        <id>O76011</id>
    </interactant>
    <interactant intactId="EBI-2818796">
        <id>Q8WTX9</id>
        <label>ZDHHC1</label>
    </interactant>
    <organismsDiffer>false</organismsDiffer>
    <experiments>3</experiments>
</comment>
<comment type="interaction">
    <interactant intactId="EBI-1047093">
        <id>O76011</id>
    </interactant>
    <interactant intactId="EBI-10237226">
        <id>Q15911-2</id>
        <label>ZFHX3</label>
    </interactant>
    <organismsDiffer>false</organismsDiffer>
    <experiments>5</experiments>
</comment>
<comment type="interaction">
    <interactant intactId="EBI-1047093">
        <id>O76011</id>
    </interactant>
    <interactant intactId="EBI-8656416">
        <id>Q68DK2-5</id>
        <label>ZFYVE26</label>
    </interactant>
    <organismsDiffer>false</organismsDiffer>
    <experiments>3</experiments>
</comment>
<comment type="interaction">
    <interactant intactId="EBI-1047093">
        <id>O76011</id>
    </interactant>
    <interactant intactId="EBI-11963196">
        <id>Q15915</id>
        <label>ZIC1</label>
    </interactant>
    <organismsDiffer>false</organismsDiffer>
    <experiments>3</experiments>
</comment>
<comment type="interaction">
    <interactant intactId="EBI-1047093">
        <id>O76011</id>
    </interactant>
    <interactant intactId="EBI-2555767">
        <id>Q15973</id>
        <label>ZNF124</label>
    </interactant>
    <organismsDiffer>false</organismsDiffer>
    <experiments>3</experiments>
</comment>
<comment type="interaction">
    <interactant intactId="EBI-1047093">
        <id>O76011</id>
    </interactant>
    <interactant intactId="EBI-11742222">
        <id>Q9UQR1-2</id>
        <label>ZNF148</label>
    </interactant>
    <organismsDiffer>false</organismsDiffer>
    <experiments>3</experiments>
</comment>
<comment type="interaction">
    <interactant intactId="EBI-1047093">
        <id>O76011</id>
    </interactant>
    <interactant intactId="EBI-11993110">
        <id>Q9P2F9</id>
        <label>ZNF319</label>
    </interactant>
    <organismsDiffer>false</organismsDiffer>
    <experiments>3</experiments>
</comment>
<comment type="interaction">
    <interactant intactId="EBI-1047093">
        <id>O76011</id>
    </interactant>
    <interactant intactId="EBI-744257">
        <id>Q96IQ9</id>
        <label>ZNF414</label>
    </interactant>
    <organismsDiffer>false</organismsDiffer>
    <experiments>3</experiments>
</comment>
<comment type="interaction">
    <interactant intactId="EBI-1047093">
        <id>O76011</id>
    </interactant>
    <interactant intactId="EBI-740232">
        <id>Q9NWS9-2</id>
        <label>ZNF446</label>
    </interactant>
    <organismsDiffer>false</organismsDiffer>
    <experiments>3</experiments>
</comment>
<comment type="interaction">
    <interactant intactId="EBI-1047093">
        <id>O76011</id>
    </interactant>
    <interactant intactId="EBI-746277">
        <id>Q9UK33</id>
        <label>ZNF580</label>
    </interactant>
    <organismsDiffer>false</organismsDiffer>
    <experiments>3</experiments>
</comment>
<comment type="interaction">
    <interactant intactId="EBI-1047093">
        <id>O76011</id>
    </interactant>
    <interactant intactId="EBI-745520">
        <id>Q9P0T4</id>
        <label>ZNF581</label>
    </interactant>
    <organismsDiffer>false</organismsDiffer>
    <experiments>3</experiments>
</comment>
<comment type="interaction">
    <interactant intactId="EBI-1047093">
        <id>O76011</id>
    </interactant>
    <interactant intactId="EBI-10237274">
        <id>Q15937</id>
        <label>ZNF79</label>
    </interactant>
    <organismsDiffer>false</organismsDiffer>
    <experiments>3</experiments>
</comment>
<comment type="tissue specificity">
    <text evidence="3">Expressed in the hair follicles.</text>
</comment>
<comment type="miscellaneous">
    <text>There are two types of hair/microfibrillar keratin, I (acidic) and II (neutral to basic).</text>
</comment>
<comment type="similarity">
    <text evidence="1">Belongs to the intermediate filament family.</text>
</comment>
<comment type="sequence caution" evidence="4">
    <conflict type="erroneous initiation">
        <sequence resource="EMBL-CDS" id="AAH41070"/>
    </conflict>
    <text>Extended N-terminus.</text>
</comment>
<accession>O76011</accession>
<accession>Q8IUT8</accession>
<accession>Q8N4W2</accession>
<organism>
    <name type="scientific">Homo sapiens</name>
    <name type="common">Human</name>
    <dbReference type="NCBI Taxonomy" id="9606"/>
    <lineage>
        <taxon>Eukaryota</taxon>
        <taxon>Metazoa</taxon>
        <taxon>Chordata</taxon>
        <taxon>Craniata</taxon>
        <taxon>Vertebrata</taxon>
        <taxon>Euteleostomi</taxon>
        <taxon>Mammalia</taxon>
        <taxon>Eutheria</taxon>
        <taxon>Euarchontoglires</taxon>
        <taxon>Primates</taxon>
        <taxon>Haplorrhini</taxon>
        <taxon>Catarrhini</taxon>
        <taxon>Hominidae</taxon>
        <taxon>Homo</taxon>
    </lineage>
</organism>
<evidence type="ECO:0000255" key="1">
    <source>
        <dbReference type="PROSITE-ProRule" id="PRU01188"/>
    </source>
</evidence>
<evidence type="ECO:0000269" key="2">
    <source>
    </source>
</evidence>
<evidence type="ECO:0000269" key="3">
    <source>
    </source>
</evidence>
<evidence type="ECO:0000305" key="4"/>
<gene>
    <name type="primary">KRT34</name>
    <name type="synonym">HHA4</name>
    <name type="synonym">HKA4</name>
    <name type="synonym">KRTHA4</name>
</gene>
<dbReference type="EMBL" id="Y16790">
    <property type="protein sequence ID" value="CAA76386.1"/>
    <property type="molecule type" value="Genomic_DNA"/>
</dbReference>
<dbReference type="EMBL" id="BC033252">
    <property type="protein sequence ID" value="AAH33252.1"/>
    <property type="molecule type" value="mRNA"/>
</dbReference>
<dbReference type="EMBL" id="BC041070">
    <property type="protein sequence ID" value="AAH41070.1"/>
    <property type="status" value="ALT_INIT"/>
    <property type="molecule type" value="mRNA"/>
</dbReference>
<dbReference type="CCDS" id="CCDS11390.2"/>
<dbReference type="RefSeq" id="NP_001372943.1">
    <property type="nucleotide sequence ID" value="NM_001386014.1"/>
</dbReference>
<dbReference type="SMR" id="O76011"/>
<dbReference type="BioGRID" id="110083">
    <property type="interactions" value="287"/>
</dbReference>
<dbReference type="BioGRID" id="1530414">
    <property type="interactions" value="1"/>
</dbReference>
<dbReference type="FunCoup" id="O76011">
    <property type="interactions" value="214"/>
</dbReference>
<dbReference type="IntAct" id="O76011">
    <property type="interactions" value="260"/>
</dbReference>
<dbReference type="STRING" id="9606.ENSP00000377570"/>
<dbReference type="GlyGen" id="O76011">
    <property type="glycosylation" value="1 site, 1 O-linked glycan (1 site)"/>
</dbReference>
<dbReference type="iPTMnet" id="O76011"/>
<dbReference type="PhosphoSitePlus" id="O76011"/>
<dbReference type="SwissPalm" id="O76011"/>
<dbReference type="BioMuta" id="KRT34"/>
<dbReference type="jPOST" id="O76011"/>
<dbReference type="MassIVE" id="O76011"/>
<dbReference type="PaxDb" id="9606-ENSP00000377570"/>
<dbReference type="PeptideAtlas" id="O76011"/>
<dbReference type="ProteomicsDB" id="50343"/>
<dbReference type="Antibodypedia" id="28834">
    <property type="antibodies" value="111 antibodies from 26 providers"/>
</dbReference>
<dbReference type="DNASU" id="3885"/>
<dbReference type="Ensembl" id="ENST00000394001.3">
    <property type="protein sequence ID" value="ENSP00000377570.3"/>
    <property type="gene ID" value="ENSG00000131737.7"/>
</dbReference>
<dbReference type="Ensembl" id="ENST00000709597.1">
    <property type="protein sequence ID" value="ENSP00000517786.1"/>
    <property type="gene ID" value="ENSG00000292033.1"/>
</dbReference>
<dbReference type="GeneID" id="3885"/>
<dbReference type="KEGG" id="hsa:100653049"/>
<dbReference type="MANE-Select" id="ENST00000394001.3">
    <property type="protein sequence ID" value="ENSP00000377570.3"/>
    <property type="RefSeq nucleotide sequence ID" value="NM_001386014.1"/>
    <property type="RefSeq protein sequence ID" value="NP_001372943.1"/>
</dbReference>
<dbReference type="UCSC" id="uc002hwm.4">
    <property type="organism name" value="human"/>
</dbReference>
<dbReference type="AGR" id="HGNC:6452"/>
<dbReference type="DisGeNET" id="3885"/>
<dbReference type="GeneCards" id="KRT34"/>
<dbReference type="HGNC" id="HGNC:6452">
    <property type="gene designation" value="KRT34"/>
</dbReference>
<dbReference type="HPA" id="ENSG00000131737">
    <property type="expression patterns" value="Tissue enriched (skin)"/>
</dbReference>
<dbReference type="MIM" id="602763">
    <property type="type" value="gene"/>
</dbReference>
<dbReference type="neXtProt" id="NX_O76011"/>
<dbReference type="OpenTargets" id="ENSG00000131737"/>
<dbReference type="PharmGKB" id="PA30241"/>
<dbReference type="VEuPathDB" id="HostDB:ENSG00000131737"/>
<dbReference type="eggNOG" id="ENOG502RTXS">
    <property type="taxonomic scope" value="Eukaryota"/>
</dbReference>
<dbReference type="GeneTree" id="ENSGT00940000163426"/>
<dbReference type="HOGENOM" id="CLU_012560_8_0_1"/>
<dbReference type="InParanoid" id="O76011"/>
<dbReference type="OrthoDB" id="2441647at2759"/>
<dbReference type="PAN-GO" id="O76011">
    <property type="GO annotations" value="3 GO annotations based on evolutionary models"/>
</dbReference>
<dbReference type="PhylomeDB" id="O76011"/>
<dbReference type="PathwayCommons" id="O76011"/>
<dbReference type="Reactome" id="R-HSA-6805567">
    <property type="pathway name" value="Keratinization"/>
</dbReference>
<dbReference type="Reactome" id="R-HSA-6809371">
    <property type="pathway name" value="Formation of the cornified envelope"/>
</dbReference>
<dbReference type="SignaLink" id="O76011"/>
<dbReference type="BioGRID-ORCS" id="100653049">
    <property type="hits" value="0 hits in 4 CRISPR screens"/>
</dbReference>
<dbReference type="BioGRID-ORCS" id="3885">
    <property type="hits" value="7 hits in 1142 CRISPR screens"/>
</dbReference>
<dbReference type="GeneWiki" id="Keratin_34"/>
<dbReference type="Pharos" id="O76011">
    <property type="development level" value="Tbio"/>
</dbReference>
<dbReference type="PRO" id="PR:O76011"/>
<dbReference type="Proteomes" id="UP000005640">
    <property type="component" value="Chromosome 17"/>
</dbReference>
<dbReference type="RNAct" id="O76011">
    <property type="molecule type" value="protein"/>
</dbReference>
<dbReference type="Bgee" id="ENSG00000131737">
    <property type="expression patterns" value="Expressed in male germ line stem cell (sensu Vertebrata) in testis and 43 other cell types or tissues"/>
</dbReference>
<dbReference type="GO" id="GO:0005856">
    <property type="term" value="C:cytoskeleton"/>
    <property type="evidence" value="ECO:0000318"/>
    <property type="project" value="GO_Central"/>
</dbReference>
<dbReference type="GO" id="GO:0005829">
    <property type="term" value="C:cytosol"/>
    <property type="evidence" value="ECO:0000304"/>
    <property type="project" value="Reactome"/>
</dbReference>
<dbReference type="GO" id="GO:0005615">
    <property type="term" value="C:extracellular space"/>
    <property type="evidence" value="ECO:0007005"/>
    <property type="project" value="UniProtKB"/>
</dbReference>
<dbReference type="GO" id="GO:0005882">
    <property type="term" value="C:intermediate filament"/>
    <property type="evidence" value="ECO:0007669"/>
    <property type="project" value="UniProtKB-KW"/>
</dbReference>
<dbReference type="GO" id="GO:0005198">
    <property type="term" value="F:structural molecule activity"/>
    <property type="evidence" value="ECO:0000303"/>
    <property type="project" value="ProtInc"/>
</dbReference>
<dbReference type="GO" id="GO:0008544">
    <property type="term" value="P:epidermis development"/>
    <property type="evidence" value="ECO:0000304"/>
    <property type="project" value="ProtInc"/>
</dbReference>
<dbReference type="GO" id="GO:0030855">
    <property type="term" value="P:epithelial cell differentiation"/>
    <property type="evidence" value="ECO:0000318"/>
    <property type="project" value="GO_Central"/>
</dbReference>
<dbReference type="GO" id="GO:0045109">
    <property type="term" value="P:intermediate filament organization"/>
    <property type="evidence" value="ECO:0000318"/>
    <property type="project" value="GO_Central"/>
</dbReference>
<dbReference type="FunFam" id="1.20.5.1160:FF:000002">
    <property type="entry name" value="Type I keratin 10"/>
    <property type="match status" value="1"/>
</dbReference>
<dbReference type="FunFam" id="1.20.5.170:FF:000002">
    <property type="entry name" value="Type I keratin KA11"/>
    <property type="match status" value="1"/>
</dbReference>
<dbReference type="FunFam" id="1.20.5.500:FF:000001">
    <property type="entry name" value="Type II keratin 23"/>
    <property type="match status" value="1"/>
</dbReference>
<dbReference type="Gene3D" id="1.20.5.170">
    <property type="match status" value="1"/>
</dbReference>
<dbReference type="Gene3D" id="1.20.5.500">
    <property type="entry name" value="Single helix bin"/>
    <property type="match status" value="1"/>
</dbReference>
<dbReference type="Gene3D" id="1.20.5.1160">
    <property type="entry name" value="Vasodilator-stimulated phosphoprotein"/>
    <property type="match status" value="1"/>
</dbReference>
<dbReference type="InterPro" id="IPR018039">
    <property type="entry name" value="IF_conserved"/>
</dbReference>
<dbReference type="InterPro" id="IPR039008">
    <property type="entry name" value="IF_rod_dom"/>
</dbReference>
<dbReference type="InterPro" id="IPR002957">
    <property type="entry name" value="Keratin_I"/>
</dbReference>
<dbReference type="PANTHER" id="PTHR23239:SF165">
    <property type="entry name" value="IF ROD DOMAIN-CONTAINING PROTEIN-RELATED"/>
    <property type="match status" value="1"/>
</dbReference>
<dbReference type="PANTHER" id="PTHR23239">
    <property type="entry name" value="INTERMEDIATE FILAMENT"/>
    <property type="match status" value="1"/>
</dbReference>
<dbReference type="Pfam" id="PF00038">
    <property type="entry name" value="Filament"/>
    <property type="match status" value="1"/>
</dbReference>
<dbReference type="PRINTS" id="PR01248">
    <property type="entry name" value="TYPE1KERATIN"/>
</dbReference>
<dbReference type="SMART" id="SM01391">
    <property type="entry name" value="Filament"/>
    <property type="match status" value="1"/>
</dbReference>
<dbReference type="SUPFAM" id="SSF64593">
    <property type="entry name" value="Intermediate filament protein, coiled coil region"/>
    <property type="match status" value="2"/>
</dbReference>
<dbReference type="PROSITE" id="PS00226">
    <property type="entry name" value="IF_ROD_1"/>
    <property type="match status" value="1"/>
</dbReference>
<dbReference type="PROSITE" id="PS51842">
    <property type="entry name" value="IF_ROD_2"/>
    <property type="match status" value="1"/>
</dbReference>
<sequence>MSYSCCLPSLGCRTSCSSRPCVPPSCHGYTLPGACNIPANVSNCNWFCEGSFNGSEKETMQFLNDRLASYLEKVRQLERDNAELEKLIQERSQQQEPLLCPSYQSYFKTIEELQQKILCAKAENARLVVNIDNAKLASDDFRSKYQTEQSLRLLVESDINSIRRILDELTLCKSDLESQVESLREELICLKKNHEEEVNTLRSQLGDRLNVEVDTAPTVDLNQVLNETRSQYEALVEINRREVEQWFATQTEELNKQVVSSSEQLQSCQAEIIELRRTVNALEIELQAQHNLRDSLENTLTESEAHYSSQLSQVQSLITNVESQLAEIRCDLERQNQEYQVLLDVRARLECEINTYRSLLESEDCKLPCNPCATTNASGNSCGPCGTSQKGCCN</sequence>
<reference key="1">
    <citation type="journal article" date="1998" name="J. Biol. Chem.">
        <title>Characterization of a 190-kilobase pair domain of human type I hair keratin genes.</title>
        <authorList>
            <person name="Rogers M.A."/>
            <person name="Winter H."/>
            <person name="Wolf C."/>
            <person name="Heck M."/>
            <person name="Schweizer J."/>
        </authorList>
    </citation>
    <scope>NUCLEOTIDE SEQUENCE [GENOMIC DNA]</scope>
    <scope>TISSUE SPECIFICITY</scope>
</reference>
<reference key="2">
    <citation type="journal article" date="2004" name="Genome Res.">
        <title>The status, quality, and expansion of the NIH full-length cDNA project: the Mammalian Gene Collection (MGC).</title>
        <authorList>
            <consortium name="The MGC Project Team"/>
        </authorList>
    </citation>
    <scope>NUCLEOTIDE SEQUENCE [LARGE SCALE MRNA]</scope>
    <scope>VARIANT THR-238</scope>
    <source>
        <tissue>Skin</tissue>
    </source>
</reference>
<protein>
    <recommendedName>
        <fullName>Keratin, type I cuticular Ha4</fullName>
    </recommendedName>
    <alternativeName>
        <fullName>Hair keratin, type I Ha4</fullName>
    </alternativeName>
    <alternativeName>
        <fullName>Keratin-34</fullName>
        <shortName>K34</shortName>
    </alternativeName>
</protein>
<keyword id="KW-0175">Coiled coil</keyword>
<keyword id="KW-0403">Intermediate filament</keyword>
<keyword id="KW-0416">Keratin</keyword>
<keyword id="KW-1267">Proteomics identification</keyword>
<keyword id="KW-1185">Reference proteome</keyword>
<proteinExistence type="evidence at protein level"/>
<feature type="chain" id="PRO_0000063691" description="Keratin, type I cuticular Ha4">
    <location>
        <begin position="1"/>
        <end position="394"/>
    </location>
</feature>
<feature type="domain" description="IF rod" evidence="1">
    <location>
        <begin position="56"/>
        <end position="367"/>
    </location>
</feature>
<feature type="region of interest" description="Head">
    <location>
        <begin position="1"/>
        <end position="56"/>
    </location>
</feature>
<feature type="region of interest" description="Coil 1A">
    <location>
        <begin position="57"/>
        <end position="91"/>
    </location>
</feature>
<feature type="region of interest" description="Linker 1">
    <location>
        <begin position="92"/>
        <end position="102"/>
    </location>
</feature>
<feature type="region of interest" description="Coil 1B">
    <location>
        <begin position="103"/>
        <end position="203"/>
    </location>
</feature>
<feature type="region of interest" description="Linker 12">
    <location>
        <begin position="204"/>
        <end position="219"/>
    </location>
</feature>
<feature type="region of interest" description="Coil 2">
    <location>
        <begin position="220"/>
        <end position="363"/>
    </location>
</feature>
<feature type="region of interest" description="Tail">
    <location>
        <begin position="364"/>
        <end position="394"/>
    </location>
</feature>
<feature type="site" description="Stutter">
    <location>
        <position position="305"/>
    </location>
</feature>
<feature type="sequence variant" id="VAR_056017" description="In dbSNP:rs2239710." evidence="2">
    <original>I</original>
    <variation>T</variation>
    <location>
        <position position="238"/>
    </location>
</feature>
<feature type="sequence variant" id="VAR_056018" description="In dbSNP:rs2071599.">
    <original>H</original>
    <variation>R</variation>
    <location>
        <position position="306"/>
    </location>
</feature>
<feature type="sequence conflict" description="In Ref. 1; CAA76386." evidence="4" ref="1">
    <original>Q</original>
    <variation>P</variation>
    <location>
        <position position="204"/>
    </location>
</feature>